<feature type="initiator methionine" description="Removed" evidence="1">
    <location>
        <position position="1"/>
    </location>
</feature>
<feature type="chain" id="PRO_0000297854" description="Histone H2B.1">
    <location>
        <begin position="2"/>
        <end position="131"/>
    </location>
</feature>
<feature type="region of interest" description="Disordered" evidence="2">
    <location>
        <begin position="1"/>
        <end position="39"/>
    </location>
</feature>
<feature type="compositionally biased region" description="Basic and acidic residues" evidence="2">
    <location>
        <begin position="1"/>
        <end position="20"/>
    </location>
</feature>
<feature type="modified residue" description="N6-acetyllysine; alternate" evidence="1">
    <location>
        <position position="8"/>
    </location>
</feature>
<feature type="modified residue" description="N6-acetyllysine; alternate" evidence="1">
    <location>
        <position position="9"/>
    </location>
</feature>
<feature type="modified residue" description="Phosphoserine" evidence="1">
    <location>
        <position position="12"/>
    </location>
</feature>
<feature type="modified residue" description="N6-acetyllysine" evidence="1">
    <location>
        <position position="13"/>
    </location>
</feature>
<feature type="modified residue" description="N6-acetyllysine; alternate" evidence="1">
    <location>
        <position position="18"/>
    </location>
</feature>
<feature type="cross-link" description="Glycyl lysine isopeptide (Lys-Gly) (interchain with G-Cter in SUMO); alternate" evidence="1">
    <location>
        <position position="8"/>
    </location>
</feature>
<feature type="cross-link" description="Glycyl lysine isopeptide (Lys-Gly) (interchain with G-Cter in SUMO); alternate" evidence="1">
    <location>
        <position position="9"/>
    </location>
</feature>
<feature type="cross-link" description="Glycyl lysine isopeptide (Lys-Gly) (interchain with G-Cter in SUMO); alternate" evidence="1">
    <location>
        <position position="18"/>
    </location>
</feature>
<feature type="cross-link" description="Glycyl lysine isopeptide (Lys-Gly) (interchain with G-Cter in SUMO)" evidence="1">
    <location>
        <position position="19"/>
    </location>
</feature>
<feature type="cross-link" description="Glycyl lysine isopeptide (Lys-Gly) (interchain with G-Cter in ubiquitin)" evidence="1">
    <location>
        <position position="125"/>
    </location>
</feature>
<accession>A3LZZ1</accession>
<sequence>MAPPKAEKKPASKAPAEKKPAAKKTASATDSKKRTKTRKETYSSYIYKVLKQTHPDTGISQKAMSIMNSFVNDIFERIASEASKLAAYNKKSTISAREIQTAVRLILPGELAKHAVSEGTRAVTKYSSASN</sequence>
<evidence type="ECO:0000250" key="1"/>
<evidence type="ECO:0000256" key="2">
    <source>
        <dbReference type="SAM" id="MobiDB-lite"/>
    </source>
</evidence>
<evidence type="ECO:0000305" key="3"/>
<name>HSB1_PICST</name>
<organism>
    <name type="scientific">Scheffersomyces stipitis (strain ATCC 58785 / CBS 6054 / NBRC 10063 / NRRL Y-11545)</name>
    <name type="common">Yeast</name>
    <name type="synonym">Pichia stipitis</name>
    <dbReference type="NCBI Taxonomy" id="322104"/>
    <lineage>
        <taxon>Eukaryota</taxon>
        <taxon>Fungi</taxon>
        <taxon>Dikarya</taxon>
        <taxon>Ascomycota</taxon>
        <taxon>Saccharomycotina</taxon>
        <taxon>Pichiomycetes</taxon>
        <taxon>Debaryomycetaceae</taxon>
        <taxon>Scheffersomyces</taxon>
    </lineage>
</organism>
<protein>
    <recommendedName>
        <fullName>Histone H2B.1</fullName>
    </recommendedName>
</protein>
<reference key="1">
    <citation type="journal article" date="2007" name="Nat. Biotechnol.">
        <title>Genome sequence of the lignocellulose-bioconverting and xylose-fermenting yeast Pichia stipitis.</title>
        <authorList>
            <person name="Jeffries T.W."/>
            <person name="Grigoriev I.V."/>
            <person name="Grimwood J."/>
            <person name="Laplaza J.M."/>
            <person name="Aerts A."/>
            <person name="Salamov A."/>
            <person name="Schmutz J."/>
            <person name="Lindquist E."/>
            <person name="Dehal P."/>
            <person name="Shapiro H."/>
            <person name="Jin Y.-S."/>
            <person name="Passoth V."/>
            <person name="Richardson P.M."/>
        </authorList>
    </citation>
    <scope>NUCLEOTIDE SEQUENCE [LARGE SCALE GENOMIC DNA]</scope>
    <source>
        <strain>ATCC 58785 / CBS 6054 / NBRC 10063 / NRRL Y-11545</strain>
    </source>
</reference>
<comment type="function">
    <text>Core component of nucleosome. Nucleosomes wrap and compact DNA into chromatin, limiting DNA accessibility to the cellular machineries which require DNA as a template. Histones thereby play a central role in transcription regulation, DNA repair, DNA replication and chromosomal stability. DNA accessibility is regulated via a complex set of post-translational modifications of histones, also called histone code, and nucleosome remodeling.</text>
</comment>
<comment type="subunit">
    <text>The nucleosome is a histone octamer containing two molecules each of H2A, H2B, H3 and H4 assembled in one H3-H4 heterotetramer and two H2A-H2B heterodimers. The octamer wraps approximately 147 bp of DNA.</text>
</comment>
<comment type="subcellular location">
    <subcellularLocation>
        <location evidence="1">Nucleus</location>
    </subcellularLocation>
    <subcellularLocation>
        <location evidence="1">Chromosome</location>
    </subcellularLocation>
</comment>
<comment type="PTM">
    <text evidence="1">Monoubiquitinated to form H2BK123ub1. H2BK123ub1 gives a specific tag for epigenetic transcriptional activation and is also prerequisite for H3K4me and H3K79me formation. H2BK123ub1 also modulates the formation of double-strand breaks during meiosis and is a prerequisite for DNA-damage checkpoint activation (By similarity).</text>
</comment>
<comment type="PTM">
    <text evidence="1">Phosphorylated by STE20 to form H2BS10ph during progression through meiotic prophase. May be correlated with chromosome condensation (By similarity).</text>
</comment>
<comment type="PTM">
    <text evidence="1">Acetylated by GCN5 to form H2BK11ac and H2BK16ac. H2BK16ac can also be formed by ESA1. Acetylation of N-terminal lysines and particularly formation of H2BK11acK16ac has a positive effect on transcription (By similarity).</text>
</comment>
<comment type="PTM">
    <text evidence="1">Sumoylation to form H2BK6su or H2BK7su, and probably also H2BK16su or H2BK17su, occurs preferentially near the telomeres and represses gene transcription.</text>
</comment>
<comment type="similarity">
    <text evidence="3">Belongs to the histone H2B family.</text>
</comment>
<comment type="caution">
    <text evidence="3">To ensure consistency between histone entries, we follow the 'Brno' nomenclature for histone modifications, with positions referring to those used in the literature for the 'closest' model organism. Due to slight variations in histone sequences between organisms and to the presence of initiator methionine in UniProtKB/Swiss-Prot sequences, the actual positions of modified amino acids in the sequence generally differ. In this entry the following conventions are used: H2BK6ac = acetylated Lys-8; H2BK6su = sumoylated Lys-8; H2BK7ac = acetylated Lys-9; H2BK7su = sumoylated Lys-9; H2BS10ph = phosphorylated Ser-12; H2BK11ac = acetylated Lys-13; H2BK16ac = acetylated Lys-18; H2BK16su = sumoylated Lys-18; H2BK17su = sumoylated Lys-19; H2BK123ub1 = monoubiquitinated Lys-125.</text>
</comment>
<gene>
    <name type="primary">HTB1</name>
    <name type="ORF">PICST_85793</name>
</gene>
<dbReference type="EMBL" id="CP000502">
    <property type="protein sequence ID" value="ABN68428.1"/>
    <property type="molecule type" value="Genomic_DNA"/>
</dbReference>
<dbReference type="RefSeq" id="XP_001386457.1">
    <property type="nucleotide sequence ID" value="XM_001386420.1"/>
</dbReference>
<dbReference type="SMR" id="A3LZZ1"/>
<dbReference type="FunCoup" id="A3LZZ1">
    <property type="interactions" value="1156"/>
</dbReference>
<dbReference type="STRING" id="322104.A3LZZ1"/>
<dbReference type="GeneID" id="4841057"/>
<dbReference type="KEGG" id="pic:PICST_85793"/>
<dbReference type="eggNOG" id="KOG1744">
    <property type="taxonomic scope" value="Eukaryota"/>
</dbReference>
<dbReference type="HOGENOM" id="CLU_075666_1_3_1"/>
<dbReference type="InParanoid" id="A3LZZ1"/>
<dbReference type="OMA" id="AQLCQTT"/>
<dbReference type="OrthoDB" id="10254238at2759"/>
<dbReference type="Proteomes" id="UP000002258">
    <property type="component" value="Chromosome 8"/>
</dbReference>
<dbReference type="GO" id="GO:0000786">
    <property type="term" value="C:nucleosome"/>
    <property type="evidence" value="ECO:0007669"/>
    <property type="project" value="UniProtKB-KW"/>
</dbReference>
<dbReference type="GO" id="GO:0005634">
    <property type="term" value="C:nucleus"/>
    <property type="evidence" value="ECO:0007669"/>
    <property type="project" value="UniProtKB-SubCell"/>
</dbReference>
<dbReference type="GO" id="GO:0003677">
    <property type="term" value="F:DNA binding"/>
    <property type="evidence" value="ECO:0007669"/>
    <property type="project" value="UniProtKB-KW"/>
</dbReference>
<dbReference type="GO" id="GO:0046982">
    <property type="term" value="F:protein heterodimerization activity"/>
    <property type="evidence" value="ECO:0007669"/>
    <property type="project" value="InterPro"/>
</dbReference>
<dbReference type="GO" id="GO:0030527">
    <property type="term" value="F:structural constituent of chromatin"/>
    <property type="evidence" value="ECO:0007669"/>
    <property type="project" value="InterPro"/>
</dbReference>
<dbReference type="CDD" id="cd22910">
    <property type="entry name" value="HFD_H2B"/>
    <property type="match status" value="1"/>
</dbReference>
<dbReference type="FunFam" id="1.10.20.10:FF:000014">
    <property type="entry name" value="Histone H2B"/>
    <property type="match status" value="1"/>
</dbReference>
<dbReference type="Gene3D" id="1.10.20.10">
    <property type="entry name" value="Histone, subunit A"/>
    <property type="match status" value="1"/>
</dbReference>
<dbReference type="InterPro" id="IPR009072">
    <property type="entry name" value="Histone-fold"/>
</dbReference>
<dbReference type="InterPro" id="IPR007125">
    <property type="entry name" value="Histone_H2A/H2B/H3"/>
</dbReference>
<dbReference type="InterPro" id="IPR000558">
    <property type="entry name" value="Histone_H2B"/>
</dbReference>
<dbReference type="InterPro" id="IPR055333">
    <property type="entry name" value="HISTONE_H2B_site"/>
</dbReference>
<dbReference type="PANTHER" id="PTHR23428">
    <property type="entry name" value="HISTONE H2B"/>
    <property type="match status" value="1"/>
</dbReference>
<dbReference type="Pfam" id="PF00125">
    <property type="entry name" value="Histone"/>
    <property type="match status" value="1"/>
</dbReference>
<dbReference type="PRINTS" id="PR00621">
    <property type="entry name" value="HISTONEH2B"/>
</dbReference>
<dbReference type="SMART" id="SM00427">
    <property type="entry name" value="H2B"/>
    <property type="match status" value="1"/>
</dbReference>
<dbReference type="SUPFAM" id="SSF47113">
    <property type="entry name" value="Histone-fold"/>
    <property type="match status" value="1"/>
</dbReference>
<dbReference type="PROSITE" id="PS00357">
    <property type="entry name" value="HISTONE_H2B"/>
    <property type="match status" value="1"/>
</dbReference>
<keyword id="KW-0007">Acetylation</keyword>
<keyword id="KW-0158">Chromosome</keyword>
<keyword id="KW-0238">DNA-binding</keyword>
<keyword id="KW-1017">Isopeptide bond</keyword>
<keyword id="KW-0544">Nucleosome core</keyword>
<keyword id="KW-0539">Nucleus</keyword>
<keyword id="KW-0597">Phosphoprotein</keyword>
<keyword id="KW-1185">Reference proteome</keyword>
<keyword id="KW-0832">Ubl conjugation</keyword>
<proteinExistence type="inferred from homology"/>